<keyword id="KW-0963">Cytoplasm</keyword>
<keyword id="KW-0968">Cytoplasmic vesicle</keyword>
<keyword id="KW-0597">Phosphoprotein</keyword>
<keyword id="KW-1185">Reference proteome</keyword>
<sequence>MSENKNSEAEDVFEFLDSLPEAKNGGKMVNTDVKGSQEGVKGGSNSVAGKTGNDGKKGDDDIFEFLEELEKSNLSLTDKKGVEKKAPSESVNNKAQDEKVEESKENKNSEQDAHGKEKEPQQQEKEEEEEEEEEEEEEEEETPLHDPIASISNWWSSSGSAKVSSIWNKTAEQASQIKNRLAQEQLDLTSKINTSTITEIARNLQKIVVGETEEVLRIHLVHDLVNYPSLQYNIESKFDQVLSSQVEGGIRIFVDEWGHPNNNGITPVEKKPSVADGELGNSKKKLQFNLFDGKVTDGEKLAFANLENAVKLFNTAHEEYQKQQKEADATPDDDRSSISSNSNKISDLFISILPIAIPQKQKDADGDFQVTDSNTPGNFNFTLVLKDITNDITTITRSQGFPVKWVNWLEGSVEKTGSTASEERNKSYDQKKQKESEDEDEDDEIIDPSEWVKEWIEDGLSLSFGVMAQNYVIDRMGL</sequence>
<proteinExistence type="evidence at protein level"/>
<feature type="chain" id="PRO_0000203040" description="Maintenance of telomere capping protein 1">
    <location>
        <begin position="1"/>
        <end position="478"/>
    </location>
</feature>
<feature type="region of interest" description="Disordered" evidence="1">
    <location>
        <begin position="1"/>
        <end position="153"/>
    </location>
</feature>
<feature type="region of interest" description="Disordered" evidence="1">
    <location>
        <begin position="321"/>
        <end position="341"/>
    </location>
</feature>
<feature type="region of interest" description="Disordered" evidence="1">
    <location>
        <begin position="416"/>
        <end position="448"/>
    </location>
</feature>
<feature type="compositionally biased region" description="Basic and acidic residues" evidence="1">
    <location>
        <begin position="77"/>
        <end position="87"/>
    </location>
</feature>
<feature type="compositionally biased region" description="Basic and acidic residues" evidence="1">
    <location>
        <begin position="95"/>
        <end position="124"/>
    </location>
</feature>
<feature type="compositionally biased region" description="Acidic residues" evidence="1">
    <location>
        <begin position="125"/>
        <end position="141"/>
    </location>
</feature>
<feature type="compositionally biased region" description="Basic and acidic residues" evidence="1">
    <location>
        <begin position="321"/>
        <end position="336"/>
    </location>
</feature>
<feature type="compositionally biased region" description="Basic and acidic residues" evidence="1">
    <location>
        <begin position="421"/>
        <end position="435"/>
    </location>
</feature>
<feature type="compositionally biased region" description="Acidic residues" evidence="1">
    <location>
        <begin position="436"/>
        <end position="447"/>
    </location>
</feature>
<feature type="modified residue" description="Phosphoserine" evidence="7 8 9">
    <location>
        <position position="273"/>
    </location>
</feature>
<feature type="modified residue" description="Phosphoserine" evidence="7 8 9">
    <location>
        <position position="436"/>
    </location>
</feature>
<organism>
    <name type="scientific">Saccharomyces cerevisiae (strain ATCC 204508 / S288c)</name>
    <name type="common">Baker's yeast</name>
    <dbReference type="NCBI Taxonomy" id="559292"/>
    <lineage>
        <taxon>Eukaryota</taxon>
        <taxon>Fungi</taxon>
        <taxon>Dikarya</taxon>
        <taxon>Ascomycota</taxon>
        <taxon>Saccharomycotina</taxon>
        <taxon>Saccharomycetes</taxon>
        <taxon>Saccharomycetales</taxon>
        <taxon>Saccharomycetaceae</taxon>
        <taxon>Saccharomyces</taxon>
    </lineage>
</organism>
<gene>
    <name type="primary">MTC1</name>
    <name type="ordered locus">YJL123C</name>
    <name type="ORF">J0718</name>
</gene>
<dbReference type="EMBL" id="Z49398">
    <property type="protein sequence ID" value="CAA89418.1"/>
    <property type="molecule type" value="Genomic_DNA"/>
</dbReference>
<dbReference type="EMBL" id="BK006943">
    <property type="protein sequence ID" value="DAA08679.1"/>
    <property type="molecule type" value="Genomic_DNA"/>
</dbReference>
<dbReference type="PIR" id="S56904">
    <property type="entry name" value="S56904"/>
</dbReference>
<dbReference type="RefSeq" id="NP_012412.1">
    <property type="nucleotide sequence ID" value="NM_001181556.1"/>
</dbReference>
<dbReference type="BioGRID" id="33633">
    <property type="interactions" value="394"/>
</dbReference>
<dbReference type="FunCoup" id="P47018">
    <property type="interactions" value="55"/>
</dbReference>
<dbReference type="IntAct" id="P47018">
    <property type="interactions" value="4"/>
</dbReference>
<dbReference type="MINT" id="P47018"/>
<dbReference type="STRING" id="4932.YJL123C"/>
<dbReference type="iPTMnet" id="P47018"/>
<dbReference type="PaxDb" id="4932-YJL123C"/>
<dbReference type="PeptideAtlas" id="P47018"/>
<dbReference type="EnsemblFungi" id="YJL123C_mRNA">
    <property type="protein sequence ID" value="YJL123C"/>
    <property type="gene ID" value="YJL123C"/>
</dbReference>
<dbReference type="GeneID" id="853319"/>
<dbReference type="KEGG" id="sce:YJL123C"/>
<dbReference type="AGR" id="SGD:S000003659"/>
<dbReference type="SGD" id="S000003659">
    <property type="gene designation" value="MTC1"/>
</dbReference>
<dbReference type="VEuPathDB" id="FungiDB:YJL123C"/>
<dbReference type="eggNOG" id="ENOG502QU4J">
    <property type="taxonomic scope" value="Eukaryota"/>
</dbReference>
<dbReference type="HOGENOM" id="CLU_042692_0_0_1"/>
<dbReference type="InParanoid" id="P47018"/>
<dbReference type="OMA" id="RIHLVHD"/>
<dbReference type="OrthoDB" id="5594977at2759"/>
<dbReference type="BioCyc" id="YEAST:G3O-31574-MONOMER"/>
<dbReference type="BioGRID-ORCS" id="853319">
    <property type="hits" value="0 hits in 10 CRISPR screens"/>
</dbReference>
<dbReference type="PRO" id="PR:P47018"/>
<dbReference type="Proteomes" id="UP000002311">
    <property type="component" value="Chromosome X"/>
</dbReference>
<dbReference type="RNAct" id="P47018">
    <property type="molecule type" value="protein"/>
</dbReference>
<dbReference type="GO" id="GO:0030137">
    <property type="term" value="C:COPI-coated vesicle"/>
    <property type="evidence" value="ECO:0007669"/>
    <property type="project" value="UniProtKB-SubCell"/>
</dbReference>
<dbReference type="GO" id="GO:0005737">
    <property type="term" value="C:cytoplasm"/>
    <property type="evidence" value="ECO:0007005"/>
    <property type="project" value="SGD"/>
</dbReference>
<dbReference type="GO" id="GO:0005794">
    <property type="term" value="C:Golgi apparatus"/>
    <property type="evidence" value="ECO:0007005"/>
    <property type="project" value="SGD"/>
</dbReference>
<dbReference type="GO" id="GO:0005739">
    <property type="term" value="C:mitochondrion"/>
    <property type="evidence" value="ECO:0000314"/>
    <property type="project" value="SGD"/>
</dbReference>
<dbReference type="InterPro" id="IPR018814">
    <property type="entry name" value="DUF5427"/>
</dbReference>
<dbReference type="PANTHER" id="PTHR28265">
    <property type="entry name" value="MAINTENANCE OF TELOMERE CAPPING PROTEIN 1"/>
    <property type="match status" value="1"/>
</dbReference>
<dbReference type="PANTHER" id="PTHR28265:SF1">
    <property type="entry name" value="MAINTENANCE OF TELOMERE CAPPING PROTEIN 1"/>
    <property type="match status" value="1"/>
</dbReference>
<dbReference type="Pfam" id="PF10310">
    <property type="entry name" value="DUF5427"/>
    <property type="match status" value="1"/>
</dbReference>
<accession>P47018</accession>
<accession>D6VW63</accession>
<reference key="1">
    <citation type="journal article" date="1996" name="Yeast">
        <title>Sequencing analysis of a 40.2 kb fragment of yeast chromosome X reveals 19 open reading frames including URA2 (5' end), TRK1, PBS2, SPT10, GCD14, RPE1, PHO86, NCA3, ASF1, CCT7, GZF3, two tRNA genes, three remnant delta elements and a Ty4 transposon.</title>
        <authorList>
            <person name="Cziepluch C."/>
            <person name="Kordes E."/>
            <person name="Pujol A."/>
            <person name="Jauniaux J.-C."/>
        </authorList>
    </citation>
    <scope>NUCLEOTIDE SEQUENCE [GENOMIC DNA]</scope>
    <source>
        <strain>ATCC 96604 / S288c / FY1679</strain>
    </source>
</reference>
<reference key="2">
    <citation type="journal article" date="1996" name="EMBO J.">
        <title>Complete nucleotide sequence of Saccharomyces cerevisiae chromosome X.</title>
        <authorList>
            <person name="Galibert F."/>
            <person name="Alexandraki D."/>
            <person name="Baur A."/>
            <person name="Boles E."/>
            <person name="Chalwatzis N."/>
            <person name="Chuat J.-C."/>
            <person name="Coster F."/>
            <person name="Cziepluch C."/>
            <person name="de Haan M."/>
            <person name="Domdey H."/>
            <person name="Durand P."/>
            <person name="Entian K.-D."/>
            <person name="Gatius M."/>
            <person name="Goffeau A."/>
            <person name="Grivell L.A."/>
            <person name="Hennemann A."/>
            <person name="Herbert C.J."/>
            <person name="Heumann K."/>
            <person name="Hilger F."/>
            <person name="Hollenberg C.P."/>
            <person name="Huang M.-E."/>
            <person name="Jacq C."/>
            <person name="Jauniaux J.-C."/>
            <person name="Katsoulou C."/>
            <person name="Kirchrath L."/>
            <person name="Kleine K."/>
            <person name="Kordes E."/>
            <person name="Koetter P."/>
            <person name="Liebl S."/>
            <person name="Louis E.J."/>
            <person name="Manus V."/>
            <person name="Mewes H.-W."/>
            <person name="Miosga T."/>
            <person name="Obermaier B."/>
            <person name="Perea J."/>
            <person name="Pohl T.M."/>
            <person name="Portetelle D."/>
            <person name="Pujol A."/>
            <person name="Purnelle B."/>
            <person name="Ramezani Rad M."/>
            <person name="Rasmussen S.W."/>
            <person name="Rose M."/>
            <person name="Rossau R."/>
            <person name="Schaaff-Gerstenschlaeger I."/>
            <person name="Smits P.H.M."/>
            <person name="Scarcez T."/>
            <person name="Soriano N."/>
            <person name="To Van D."/>
            <person name="Tzermia M."/>
            <person name="Van Broekhoven A."/>
            <person name="Vandenbol M."/>
            <person name="Wedler H."/>
            <person name="von Wettstein D."/>
            <person name="Wambutt R."/>
            <person name="Zagulski M."/>
            <person name="Zollner A."/>
            <person name="Karpfinger-Hartl L."/>
        </authorList>
    </citation>
    <scope>NUCLEOTIDE SEQUENCE [LARGE SCALE GENOMIC DNA]</scope>
    <source>
        <strain>ATCC 204508 / S288c</strain>
    </source>
</reference>
<reference key="3">
    <citation type="journal article" date="2003" name="Nature">
        <title>Global analysis of protein localization in budding yeast.</title>
        <authorList>
            <person name="Huh W.-K."/>
            <person name="Falvo J.V."/>
            <person name="Gerke L.C."/>
            <person name="Carroll A.S."/>
            <person name="Howson R.W."/>
            <person name="Weissman J.S."/>
            <person name="O'Shea E.K."/>
        </authorList>
    </citation>
    <scope>SUBCELLULAR LOCATION [LARGE SCALE ANALYSIS]</scope>
</reference>
<reference key="4">
    <citation type="journal article" date="2014" name="G3 (Bethesda)">
        <title>The reference genome sequence of Saccharomyces cerevisiae: Then and now.</title>
        <authorList>
            <person name="Engel S.R."/>
            <person name="Dietrich F.S."/>
            <person name="Fisk D.G."/>
            <person name="Binkley G."/>
            <person name="Balakrishnan R."/>
            <person name="Costanzo M.C."/>
            <person name="Dwight S.S."/>
            <person name="Hitz B.C."/>
            <person name="Karra K."/>
            <person name="Nash R.S."/>
            <person name="Weng S."/>
            <person name="Wong E.D."/>
            <person name="Lloyd P."/>
            <person name="Skrzypek M.S."/>
            <person name="Miyasato S.R."/>
            <person name="Simison M."/>
            <person name="Cherry J.M."/>
        </authorList>
    </citation>
    <scope>GENOME REANNOTATION</scope>
    <source>
        <strain>ATCC 204508 / S288c</strain>
    </source>
</reference>
<reference key="5">
    <citation type="journal article" date="2006" name="Genes Dev.">
        <title>Systematic identification and functional screens of uncharacterized proteins associated with eukaryotic ribosomal complexes.</title>
        <authorList>
            <person name="Fleischer T.C."/>
            <person name="Weaver C.M."/>
            <person name="McAfee K.J."/>
            <person name="Jennings J.L."/>
            <person name="Link A.J."/>
        </authorList>
    </citation>
    <scope>IDENTIFICATION BY MASS SPECTROMETRY</scope>
    <scope>SUBUNIT</scope>
</reference>
<reference key="6">
    <citation type="journal article" date="2003" name="Nature">
        <title>Global analysis of protein expression in yeast.</title>
        <authorList>
            <person name="Ghaemmaghami S."/>
            <person name="Huh W.-K."/>
            <person name="Bower K."/>
            <person name="Howson R.W."/>
            <person name="Belle A."/>
            <person name="Dephoure N."/>
            <person name="O'Shea E.K."/>
            <person name="Weissman J.S."/>
        </authorList>
    </citation>
    <scope>LEVEL OF PROTEIN EXPRESSION [LARGE SCALE ANALYSIS]</scope>
</reference>
<reference key="7">
    <citation type="journal article" date="2007" name="J. Proteome Res.">
        <title>Large-scale phosphorylation analysis of alpha-factor-arrested Saccharomyces cerevisiae.</title>
        <authorList>
            <person name="Li X."/>
            <person name="Gerber S.A."/>
            <person name="Rudner A.D."/>
            <person name="Beausoleil S.A."/>
            <person name="Haas W."/>
            <person name="Villen J."/>
            <person name="Elias J.E."/>
            <person name="Gygi S.P."/>
        </authorList>
    </citation>
    <scope>PHOSPHORYLATION [LARGE SCALE ANALYSIS] AT SER-273 AND SER-436</scope>
    <scope>IDENTIFICATION BY MASS SPECTROMETRY [LARGE SCALE ANALYSIS]</scope>
    <source>
        <strain>ADR376</strain>
    </source>
</reference>
<reference key="8">
    <citation type="journal article" date="2008" name="Genetics">
        <title>A genomewide suppressor and enhancer analysis of cdc13-1 reveals varied cellular processes influencing telomere capping in Saccharomyces cerevisiae.</title>
        <authorList>
            <person name="Addinall S.G."/>
            <person name="Downey M."/>
            <person name="Yu M."/>
            <person name="Zubko M.K."/>
            <person name="Dewar J."/>
            <person name="Leake A."/>
            <person name="Hallinan J."/>
            <person name="Shaw O."/>
            <person name="James K."/>
            <person name="Wilkinson D.J."/>
            <person name="Wipat A."/>
            <person name="Durocher D."/>
            <person name="Lydall D."/>
        </authorList>
    </citation>
    <scope>FUNCTION</scope>
</reference>
<reference key="9">
    <citation type="journal article" date="2008" name="Mol. Cell. Proteomics">
        <title>A multidimensional chromatography technology for in-depth phosphoproteome analysis.</title>
        <authorList>
            <person name="Albuquerque C.P."/>
            <person name="Smolka M.B."/>
            <person name="Payne S.H."/>
            <person name="Bafna V."/>
            <person name="Eng J."/>
            <person name="Zhou H."/>
        </authorList>
    </citation>
    <scope>PHOSPHORYLATION [LARGE SCALE ANALYSIS] AT SER-273 AND SER-436</scope>
    <scope>IDENTIFICATION BY MASS SPECTROMETRY [LARGE SCALE ANALYSIS]</scope>
</reference>
<reference key="10">
    <citation type="journal article" date="2009" name="Science">
        <title>Global analysis of Cdk1 substrate phosphorylation sites provides insights into evolution.</title>
        <authorList>
            <person name="Holt L.J."/>
            <person name="Tuch B.B."/>
            <person name="Villen J."/>
            <person name="Johnson A.D."/>
            <person name="Gygi S.P."/>
            <person name="Morgan D.O."/>
        </authorList>
    </citation>
    <scope>PHOSPHORYLATION [LARGE SCALE ANALYSIS] AT SER-273 AND SER-436</scope>
    <scope>IDENTIFICATION BY MASS SPECTROMETRY [LARGE SCALE ANALYSIS]</scope>
</reference>
<evidence type="ECO:0000256" key="1">
    <source>
        <dbReference type="SAM" id="MobiDB-lite"/>
    </source>
</evidence>
<evidence type="ECO:0000269" key="2">
    <source>
    </source>
</evidence>
<evidence type="ECO:0000269" key="3">
    <source>
    </source>
</evidence>
<evidence type="ECO:0000269" key="4">
    <source>
    </source>
</evidence>
<evidence type="ECO:0000269" key="5">
    <source>
    </source>
</evidence>
<evidence type="ECO:0000305" key="6"/>
<evidence type="ECO:0007744" key="7">
    <source>
    </source>
</evidence>
<evidence type="ECO:0007744" key="8">
    <source>
    </source>
</evidence>
<evidence type="ECO:0007744" key="9">
    <source>
    </source>
</evidence>
<name>MTC1_YEAST</name>
<protein>
    <recommendedName>
        <fullName>Maintenance of telomere capping protein 1</fullName>
    </recommendedName>
</protein>
<comment type="function">
    <text evidence="5">Involved in telomere capping.</text>
</comment>
<comment type="subunit">
    <text evidence="4">Interacts with ribosomes.</text>
</comment>
<comment type="subcellular location">
    <subcellularLocation>
        <location evidence="2">Cytoplasm</location>
    </subcellularLocation>
    <subcellularLocation>
        <location evidence="2">Cytoplasmic vesicle</location>
        <location evidence="2">COPI-coated vesicle</location>
    </subcellularLocation>
</comment>
<comment type="miscellaneous">
    <text evidence="3">Present with 2160 molecules/cell in log phase SD medium.</text>
</comment>
<comment type="similarity">
    <text evidence="6">Belongs to the MTC1 family.</text>
</comment>